<organism>
    <name type="scientific">Neurospora crassa (strain ATCC 24698 / 74-OR23-1A / CBS 708.71 / DSM 1257 / FGSC 987)</name>
    <dbReference type="NCBI Taxonomy" id="367110"/>
    <lineage>
        <taxon>Eukaryota</taxon>
        <taxon>Fungi</taxon>
        <taxon>Dikarya</taxon>
        <taxon>Ascomycota</taxon>
        <taxon>Pezizomycotina</taxon>
        <taxon>Sordariomycetes</taxon>
        <taxon>Sordariomycetidae</taxon>
        <taxon>Sordariales</taxon>
        <taxon>Sordariaceae</taxon>
        <taxon>Neurospora</taxon>
    </lineage>
</organism>
<evidence type="ECO:0000250" key="1">
    <source>
        <dbReference type="UniProtKB" id="P0DPD7"/>
    </source>
</evidence>
<evidence type="ECO:0000256" key="2">
    <source>
        <dbReference type="SAM" id="MobiDB-lite"/>
    </source>
</evidence>
<evidence type="ECO:0000269" key="3">
    <source>
    </source>
</evidence>
<evidence type="ECO:0000269" key="4">
    <source>
    </source>
</evidence>
<evidence type="ECO:0000269" key="5">
    <source>
    </source>
</evidence>
<evidence type="ECO:0000303" key="6">
    <source>
    </source>
</evidence>
<evidence type="ECO:0000305" key="7"/>
<evidence type="ECO:0000305" key="8">
    <source>
    </source>
</evidence>
<name>SRDJ_NEUCR</name>
<reference key="1">
    <citation type="journal article" date="2003" name="Nature">
        <title>The genome sequence of the filamentous fungus Neurospora crassa.</title>
        <authorList>
            <person name="Galagan J.E."/>
            <person name="Calvo S.E."/>
            <person name="Borkovich K.A."/>
            <person name="Selker E.U."/>
            <person name="Read N.D."/>
            <person name="Jaffe D.B."/>
            <person name="FitzHugh W."/>
            <person name="Ma L.-J."/>
            <person name="Smirnov S."/>
            <person name="Purcell S."/>
            <person name="Rehman B."/>
            <person name="Elkins T."/>
            <person name="Engels R."/>
            <person name="Wang S."/>
            <person name="Nielsen C.B."/>
            <person name="Butler J."/>
            <person name="Endrizzi M."/>
            <person name="Qui D."/>
            <person name="Ianakiev P."/>
            <person name="Bell-Pedersen D."/>
            <person name="Nelson M.A."/>
            <person name="Werner-Washburne M."/>
            <person name="Selitrennikoff C.P."/>
            <person name="Kinsey J.A."/>
            <person name="Braun E.L."/>
            <person name="Zelter A."/>
            <person name="Schulte U."/>
            <person name="Kothe G.O."/>
            <person name="Jedd G."/>
            <person name="Mewes H.-W."/>
            <person name="Staben C."/>
            <person name="Marcotte E."/>
            <person name="Greenberg D."/>
            <person name="Roy A."/>
            <person name="Foley K."/>
            <person name="Naylor J."/>
            <person name="Stange-Thomann N."/>
            <person name="Barrett R."/>
            <person name="Gnerre S."/>
            <person name="Kamal M."/>
            <person name="Kamvysselis M."/>
            <person name="Mauceli E.W."/>
            <person name="Bielke C."/>
            <person name="Rudd S."/>
            <person name="Frishman D."/>
            <person name="Krystofova S."/>
            <person name="Rasmussen C."/>
            <person name="Metzenberg R.L."/>
            <person name="Perkins D.D."/>
            <person name="Kroken S."/>
            <person name="Cogoni C."/>
            <person name="Macino G."/>
            <person name="Catcheside D.E.A."/>
            <person name="Li W."/>
            <person name="Pratt R.J."/>
            <person name="Osmani S.A."/>
            <person name="DeSouza C.P.C."/>
            <person name="Glass N.L."/>
            <person name="Orbach M.J."/>
            <person name="Berglund J.A."/>
            <person name="Voelker R."/>
            <person name="Yarden O."/>
            <person name="Plamann M."/>
            <person name="Seiler S."/>
            <person name="Dunlap J.C."/>
            <person name="Radford A."/>
            <person name="Aramayo R."/>
            <person name="Natvig D.O."/>
            <person name="Alex L.A."/>
            <person name="Mannhaupt G."/>
            <person name="Ebbole D.J."/>
            <person name="Freitag M."/>
            <person name="Paulsen I."/>
            <person name="Sachs M.S."/>
            <person name="Lander E.S."/>
            <person name="Nusbaum C."/>
            <person name="Birren B.W."/>
        </authorList>
    </citation>
    <scope>NUCLEOTIDE SEQUENCE [LARGE SCALE GENOMIC DNA]</scope>
    <source>
        <strain>ATCC 24698 / 74-OR23-1A / CBS 708.71 / DSM 1257 / FGSC 987</strain>
    </source>
</reference>
<reference key="2">
    <citation type="journal article" date="2009" name="Curr. Genet.">
        <title>A novel polyketide biosynthesis gene cluster is involved in fruiting body morphogenesis in the filamentous fungi Sordaria macrospora and Neurospora crassa.</title>
        <authorList>
            <person name="Nowrousian M."/>
        </authorList>
    </citation>
    <scope>FUNCTION</scope>
    <scope>INDUCTION</scope>
</reference>
<reference key="3">
    <citation type="journal article" date="2017" name="Environ. Microbiol.">
        <title>Production of a fungal furocoumarin by a polyketide synthase gene cluster confers the chemo-resistance of Neurospora crassa to the predation by fungivorous arthropods.</title>
        <authorList>
            <person name="Zhao Y."/>
            <person name="Ding J."/>
            <person name="Yuan W."/>
            <person name="Huang J."/>
            <person name="Huang W."/>
            <person name="Wang Y."/>
            <person name="Zheng W."/>
        </authorList>
    </citation>
    <scope>FUNCTION</scope>
    <scope>INDUCTION</scope>
</reference>
<reference key="4">
    <citation type="journal article" date="2019" name="J. Nat. Prod.">
        <title>Genome mining reveals Neurospora crassa can produce the salicylaldehyde sordarial.</title>
        <authorList>
            <person name="Zhao Z."/>
            <person name="Ying Y."/>
            <person name="Hung Y.S."/>
            <person name="Tang Y."/>
        </authorList>
    </citation>
    <scope>FUNCTION</scope>
    <scope>PATHWAY</scope>
</reference>
<protein>
    <recommendedName>
        <fullName evidence="6">Methyltransferase srdJ</fullName>
        <ecNumber evidence="8">2.1.1.-</ecNumber>
    </recommendedName>
    <alternativeName>
        <fullName evidence="6">Sordarial biosynthesis cluster protein srdJ</fullName>
    </alternativeName>
</protein>
<gene>
    <name evidence="6" type="primary">srdJ</name>
    <name type="ORF">NCU02917</name>
</gene>
<keyword id="KW-0489">Methyltransferase</keyword>
<keyword id="KW-1185">Reference proteome</keyword>
<keyword id="KW-0949">S-adenosyl-L-methionine</keyword>
<keyword id="KW-0808">Transferase</keyword>
<accession>Q7SHI7</accession>
<dbReference type="EC" id="2.1.1.-" evidence="8"/>
<dbReference type="EMBL" id="CM002236">
    <property type="protein sequence ID" value="EAA36363.2"/>
    <property type="molecule type" value="Genomic_DNA"/>
</dbReference>
<dbReference type="RefSeq" id="XP_965599.2">
    <property type="nucleotide sequence ID" value="XM_960506.2"/>
</dbReference>
<dbReference type="SMR" id="Q7SHI7"/>
<dbReference type="PaxDb" id="5141-EFNCRP00000002245"/>
<dbReference type="EnsemblFungi" id="EAA36363">
    <property type="protein sequence ID" value="EAA36363"/>
    <property type="gene ID" value="NCU02917"/>
</dbReference>
<dbReference type="GeneID" id="3881724"/>
<dbReference type="KEGG" id="ncr:NCU02917"/>
<dbReference type="VEuPathDB" id="FungiDB:NCU02917"/>
<dbReference type="HOGENOM" id="CLU_1360269_0_0_1"/>
<dbReference type="InParanoid" id="Q7SHI7"/>
<dbReference type="OrthoDB" id="411785at2759"/>
<dbReference type="Proteomes" id="UP000001805">
    <property type="component" value="Chromosome 1, Linkage Group I"/>
</dbReference>
<dbReference type="GO" id="GO:0008168">
    <property type="term" value="F:methyltransferase activity"/>
    <property type="evidence" value="ECO:0007669"/>
    <property type="project" value="UniProtKB-KW"/>
</dbReference>
<dbReference type="GO" id="GO:0032259">
    <property type="term" value="P:methylation"/>
    <property type="evidence" value="ECO:0007669"/>
    <property type="project" value="UniProtKB-KW"/>
</dbReference>
<dbReference type="CDD" id="cd02440">
    <property type="entry name" value="AdoMet_MTases"/>
    <property type="match status" value="1"/>
</dbReference>
<dbReference type="Gene3D" id="3.40.50.150">
    <property type="entry name" value="Vaccinia Virus protein VP39"/>
    <property type="match status" value="1"/>
</dbReference>
<dbReference type="InterPro" id="IPR051419">
    <property type="entry name" value="Lys/N-term_MeTrsfase_sf"/>
</dbReference>
<dbReference type="InterPro" id="IPR029063">
    <property type="entry name" value="SAM-dependent_MTases_sf"/>
</dbReference>
<dbReference type="PANTHER" id="PTHR12176:SF84">
    <property type="entry name" value="METHYLTRANSFERASE DOMAIN-CONTAINING PROTEIN"/>
    <property type="match status" value="1"/>
</dbReference>
<dbReference type="PANTHER" id="PTHR12176">
    <property type="entry name" value="SAM-DEPENDENT METHYLTRANSFERASE SUPERFAMILY PROTEIN"/>
    <property type="match status" value="1"/>
</dbReference>
<dbReference type="SUPFAM" id="SSF53335">
    <property type="entry name" value="S-adenosyl-L-methionine-dependent methyltransferases"/>
    <property type="match status" value="1"/>
</dbReference>
<feature type="chain" id="PRO_0000449338" description="Methyltransferase srdJ">
    <location>
        <begin position="1"/>
        <end position="233"/>
    </location>
</feature>
<feature type="region of interest" description="Disordered" evidence="2">
    <location>
        <begin position="1"/>
        <end position="32"/>
    </location>
</feature>
<feature type="short sequence motif" description="Required for methyltransferase activity" evidence="1">
    <location>
        <begin position="140"/>
        <end position="146"/>
    </location>
</feature>
<feature type="compositionally biased region" description="Low complexity" evidence="2">
    <location>
        <begin position="9"/>
        <end position="21"/>
    </location>
</feature>
<feature type="binding site" evidence="1">
    <location>
        <position position="40"/>
    </location>
    <ligand>
        <name>S-adenosyl-L-methionine</name>
        <dbReference type="ChEBI" id="CHEBI:59789"/>
    </ligand>
</feature>
<feature type="binding site" evidence="1">
    <location>
        <position position="52"/>
    </location>
    <ligand>
        <name>S-adenosyl-L-methionine</name>
        <dbReference type="ChEBI" id="CHEBI:59789"/>
    </ligand>
</feature>
<feature type="binding site" evidence="1">
    <location>
        <position position="81"/>
    </location>
    <ligand>
        <name>S-adenosyl-L-methionine</name>
        <dbReference type="ChEBI" id="CHEBI:59789"/>
    </ligand>
</feature>
<proteinExistence type="evidence at transcript level"/>
<comment type="function">
    <text evidence="3 4 5">Methyltransferase; part of the gene cluster that mediates the biosynthesis of sordarial, a salicylic aldehyde structurally related to the phytotoxin pyriculol (PubMed:19277664, PubMed:28485098, PubMed:30908040). The most interesting aspect of this pathway is formation of an aromatic product from the highly reducing polyketide synthase srdA (PubMed:30908040). SrdA synthesizes a reduced polyketide chain from one molecule of acetyl-CoA and five molecules of malonyl-CoA (PubMed:30908040). The polyketide chain is then reductively released as an aldehyde (PubMed:30908040). The oxidoreductases srdC, srdD and srdE then oxidize one of the hydroxy groups to facilitate the intramolecular aldol condensation, followed by dehydration to yield a salicylic aldehyde (PubMed:30908040). This aldehyde can undergo facile reduction by endogenous reductases to yield the alcohol 1-hydroxy-2-hydroxymethyl-3-pent-1,3-dienylbenzene (PubMed:30908040). The flavin-dependent srdI counteract against the propensity of the aldehydes to be reduced under physiological conditions and is responsible for reoxidizing 1-hydroxy-2-hydroxymethyl-3-pent-1,3-dienylbenzene back to the salicylic aldehyde (PubMed:30908040). This salicylic aldehyde is then selectively epoxidized by the cupin-domain-containing oxidoreductase srdB to yield the epoxide, which can be hydrolyzed stereoselectively by the hydrolase srdG to give the final product sordarial (PubMed:30908040).</text>
</comment>
<comment type="induction">
    <text evidence="3 4">Expression is up-regulated during sexual development (PubMed:19277664). Expression is also up-regulated during confrontation with the arthropod fungivore Drosophila melanogaster (PubMed:28485098).</text>
</comment>
<comment type="similarity">
    <text evidence="7">Belongs to the methyltransferase superfamily.</text>
</comment>
<comment type="caution">
    <text evidence="4 5">A recent genetics report associated srdA and its cluster with the biosynthesis of furanocoumarin neurosporin A, a metabolite produced by N.crassa for chemoresistance against predation by arthropod fungivores (PubMed:28485098). However, based on the gene cluster organization and predicted gene functions, this cluster is unlikely to be involved in neurosporin A biosynthesis, but instead produces compounds similar to pyriculol (PubMed:30908040).</text>
</comment>
<sequence>MFQVQTAGTRTGTSSPDTTTSEAGLGSTPPMPDFDKQSYWHQRFESETAFEWLIPSSTFMPLLEAFLNKLPGSDARILHLGFGTSDLQVQLRTRGFVNITNVDYEPLAIERGRHLEMTAFGDVTMQYITADATNLASVPEISSQKYHLVVDKSTADAISCAGDDAVLAMAQGIHRSLADDGVWISVSYSAFRYDSPQLPFDVEVIARIPTAKARATDPDIYHYCYLLRPKPKV</sequence>